<feature type="signal peptide" evidence="2">
    <location>
        <begin position="1"/>
        <end position="19"/>
    </location>
</feature>
<feature type="propeptide" id="PRO_0000010454">
    <location>
        <begin position="20"/>
        <end position="30"/>
    </location>
</feature>
<feature type="peptide" id="PRO_0000010455" description="Galanin">
    <location>
        <begin position="33"/>
        <end position="61"/>
    </location>
</feature>
<feature type="peptide" id="PRO_0000010456" description="Galanin message-associated peptide">
    <location>
        <begin position="65"/>
        <end position="123"/>
    </location>
</feature>
<feature type="modified residue" description="Alanine amide" evidence="4">
    <location>
        <position position="61"/>
    </location>
</feature>
<feature type="modified residue" description="Phosphoserine" evidence="1">
    <location>
        <position position="116"/>
    </location>
</feature>
<feature type="modified residue" description="Phosphoserine" evidence="1">
    <location>
        <position position="117"/>
    </location>
</feature>
<gene>
    <name type="primary">GAL</name>
    <name type="synonym">GALN</name>
</gene>
<comment type="function">
    <text evidence="3 4">Endocrine hormone of the central and peripheral nervous systems that binds and activates the G protein-coupled receptors GALR1, GALR2, and GALR3. This small neuropeptide may regulate diverse physiologic functions including contraction of smooth muscle of the gastrointestinal and genitourinary tract, growth hormone and insulin release and adrenal secretion.</text>
</comment>
<comment type="subcellular location">
    <subcellularLocation>
        <location evidence="3 4">Secreted</location>
    </subcellularLocation>
</comment>
<comment type="similarity">
    <text evidence="5">Belongs to the galanin family.</text>
</comment>
<proteinExistence type="evidence at protein level"/>
<keyword id="KW-0027">Amidation</keyword>
<keyword id="KW-0165">Cleavage on pair of basic residues</keyword>
<keyword id="KW-0903">Direct protein sequencing</keyword>
<keyword id="KW-0372">Hormone</keyword>
<keyword id="KW-0527">Neuropeptide</keyword>
<keyword id="KW-0597">Phosphoprotein</keyword>
<keyword id="KW-1185">Reference proteome</keyword>
<keyword id="KW-0964">Secreted</keyword>
<keyword id="KW-0732">Signal</keyword>
<protein>
    <recommendedName>
        <fullName>Galanin peptides</fullName>
    </recommendedName>
    <component>
        <recommendedName>
            <fullName>Galanin</fullName>
        </recommendedName>
    </component>
    <component>
        <recommendedName>
            <fullName>Galanin message-associated peptide</fullName>
            <shortName>GMAP</shortName>
        </recommendedName>
    </component>
</protein>
<organism>
    <name type="scientific">Sus scrofa</name>
    <name type="common">Pig</name>
    <dbReference type="NCBI Taxonomy" id="9823"/>
    <lineage>
        <taxon>Eukaryota</taxon>
        <taxon>Metazoa</taxon>
        <taxon>Chordata</taxon>
        <taxon>Craniata</taxon>
        <taxon>Vertebrata</taxon>
        <taxon>Euteleostomi</taxon>
        <taxon>Mammalia</taxon>
        <taxon>Eutheria</taxon>
        <taxon>Laurasiatheria</taxon>
        <taxon>Artiodactyla</taxon>
        <taxon>Suina</taxon>
        <taxon>Suidae</taxon>
        <taxon>Sus</taxon>
    </lineage>
</organism>
<sequence length="123" mass="13081">MPRGCALLLASLLLASALSATLGLGSPVKEKRGWTLNSAGYLLGPHAIDNHRSFHDKYGLAGKRELEPEDEARPGGFDRLQSEDKAIRTIMEFLAFLHLKEAGALGRLPGLPSAASSEDAGQS</sequence>
<dbReference type="EMBL" id="M13826">
    <property type="protein sequence ID" value="AAA31097.1"/>
    <property type="molecule type" value="mRNA"/>
</dbReference>
<dbReference type="PIR" id="A23540">
    <property type="entry name" value="RHPGN"/>
</dbReference>
<dbReference type="RefSeq" id="NP_999399.1">
    <property type="nucleotide sequence ID" value="NM_214234.1"/>
</dbReference>
<dbReference type="BioGRID" id="1149592">
    <property type="interactions" value="1"/>
</dbReference>
<dbReference type="FunCoup" id="P07480">
    <property type="interactions" value="298"/>
</dbReference>
<dbReference type="STRING" id="9823.ENSSSCP00000049172"/>
<dbReference type="PaxDb" id="9823-ENSSSCP00000013698"/>
<dbReference type="Ensembl" id="ENSSSCT00035068053.1">
    <property type="protein sequence ID" value="ENSSSCP00035027569.1"/>
    <property type="gene ID" value="ENSSSCG00035051075.1"/>
</dbReference>
<dbReference type="Ensembl" id="ENSSSCT00105077155">
    <property type="protein sequence ID" value="ENSSSCP00105054588"/>
    <property type="gene ID" value="ENSSSCG00105040478"/>
</dbReference>
<dbReference type="GeneID" id="397465"/>
<dbReference type="KEGG" id="ssc:397465"/>
<dbReference type="CTD" id="51083"/>
<dbReference type="eggNOG" id="ENOG502RZ1E">
    <property type="taxonomic scope" value="Eukaryota"/>
</dbReference>
<dbReference type="HOGENOM" id="CLU_166244_0_0_1"/>
<dbReference type="InParanoid" id="P07480"/>
<dbReference type="OrthoDB" id="8721537at2759"/>
<dbReference type="TreeFam" id="TF335850"/>
<dbReference type="Proteomes" id="UP000008227">
    <property type="component" value="Unplaced"/>
</dbReference>
<dbReference type="Proteomes" id="UP000314985">
    <property type="component" value="Unplaced"/>
</dbReference>
<dbReference type="Proteomes" id="UP000694570">
    <property type="component" value="Unplaced"/>
</dbReference>
<dbReference type="Proteomes" id="UP000694571">
    <property type="component" value="Unplaced"/>
</dbReference>
<dbReference type="Proteomes" id="UP000694720">
    <property type="component" value="Unplaced"/>
</dbReference>
<dbReference type="Proteomes" id="UP000694722">
    <property type="component" value="Unplaced"/>
</dbReference>
<dbReference type="Proteomes" id="UP000694723">
    <property type="component" value="Unplaced"/>
</dbReference>
<dbReference type="Proteomes" id="UP000694724">
    <property type="component" value="Unplaced"/>
</dbReference>
<dbReference type="Proteomes" id="UP000694725">
    <property type="component" value="Unplaced"/>
</dbReference>
<dbReference type="Proteomes" id="UP000694726">
    <property type="component" value="Unplaced"/>
</dbReference>
<dbReference type="Proteomes" id="UP000694727">
    <property type="component" value="Unplaced"/>
</dbReference>
<dbReference type="Proteomes" id="UP000694728">
    <property type="component" value="Unplaced"/>
</dbReference>
<dbReference type="GO" id="GO:0005615">
    <property type="term" value="C:extracellular space"/>
    <property type="evidence" value="ECO:0000318"/>
    <property type="project" value="GO_Central"/>
</dbReference>
<dbReference type="GO" id="GO:0030141">
    <property type="term" value="C:secretory granule"/>
    <property type="evidence" value="ECO:0000318"/>
    <property type="project" value="GO_Central"/>
</dbReference>
<dbReference type="GO" id="GO:0004966">
    <property type="term" value="F:galanin receptor activity"/>
    <property type="evidence" value="ECO:0000250"/>
    <property type="project" value="UniProtKB"/>
</dbReference>
<dbReference type="GO" id="GO:0031763">
    <property type="term" value="F:galanin receptor binding"/>
    <property type="evidence" value="ECO:0000318"/>
    <property type="project" value="GO_Central"/>
</dbReference>
<dbReference type="GO" id="GO:0005184">
    <property type="term" value="F:neuropeptide hormone activity"/>
    <property type="evidence" value="ECO:0000250"/>
    <property type="project" value="UniProtKB"/>
</dbReference>
<dbReference type="GO" id="GO:0031764">
    <property type="term" value="F:type 1 galanin receptor binding"/>
    <property type="evidence" value="ECO:0000250"/>
    <property type="project" value="UniProtKB"/>
</dbReference>
<dbReference type="GO" id="GO:0031765">
    <property type="term" value="F:type 2 galanin receptor binding"/>
    <property type="evidence" value="ECO:0000250"/>
    <property type="project" value="UniProtKB"/>
</dbReference>
<dbReference type="GO" id="GO:0031766">
    <property type="term" value="F:type 3 galanin receptor binding"/>
    <property type="evidence" value="ECO:0000250"/>
    <property type="project" value="UniProtKB"/>
</dbReference>
<dbReference type="GO" id="GO:0007218">
    <property type="term" value="P:neuropeptide signaling pathway"/>
    <property type="evidence" value="ECO:0000318"/>
    <property type="project" value="GO_Central"/>
</dbReference>
<dbReference type="GO" id="GO:0045944">
    <property type="term" value="P:positive regulation of transcription by RNA polymerase II"/>
    <property type="evidence" value="ECO:0000250"/>
    <property type="project" value="UniProtKB"/>
</dbReference>
<dbReference type="InterPro" id="IPR008174">
    <property type="entry name" value="Galanin"/>
</dbReference>
<dbReference type="InterPro" id="IPR008175">
    <property type="entry name" value="Galanin_pre"/>
</dbReference>
<dbReference type="InterPro" id="IPR013068">
    <property type="entry name" value="GMAP"/>
</dbReference>
<dbReference type="PANTHER" id="PTHR16839">
    <property type="entry name" value="GALANIN"/>
    <property type="match status" value="1"/>
</dbReference>
<dbReference type="PANTHER" id="PTHR16839:SF1">
    <property type="entry name" value="GALANIN PEPTIDES"/>
    <property type="match status" value="1"/>
</dbReference>
<dbReference type="Pfam" id="PF01296">
    <property type="entry name" value="Galanin"/>
    <property type="match status" value="1"/>
</dbReference>
<dbReference type="Pfam" id="PF06540">
    <property type="entry name" value="GMAP"/>
    <property type="match status" value="1"/>
</dbReference>
<dbReference type="PRINTS" id="PR00273">
    <property type="entry name" value="GALANIN"/>
</dbReference>
<dbReference type="SMART" id="SM00071">
    <property type="entry name" value="Galanin"/>
    <property type="match status" value="1"/>
</dbReference>
<dbReference type="PROSITE" id="PS00861">
    <property type="entry name" value="GALANIN"/>
    <property type="match status" value="1"/>
</dbReference>
<evidence type="ECO:0000250" key="1">
    <source>
        <dbReference type="UniProtKB" id="P22466"/>
    </source>
</evidence>
<evidence type="ECO:0000255" key="2"/>
<evidence type="ECO:0000269" key="3">
    <source>
    </source>
</evidence>
<evidence type="ECO:0000269" key="4">
    <source>
    </source>
</evidence>
<evidence type="ECO:0000305" key="5"/>
<accession>P07480</accession>
<accession>Q9TRN1</accession>
<reference key="1">
    <citation type="journal article" date="1986" name="Proc. Natl. Acad. Sci. U.S.A.">
        <title>Construction of a porcine adrenal medullary cDNA library and nucleotide sequence analysis of two clones encoding a galanin precursor.</title>
        <authorList>
            <person name="Rokaeus A."/>
            <person name="Brownstein M.J."/>
        </authorList>
    </citation>
    <scope>NUCLEOTIDE SEQUENCE [MRNA]</scope>
</reference>
<reference key="2">
    <citation type="journal article" date="1991" name="Endocrinology">
        <title>Galanin and galanin extended at the N-terminus with seven and nine amino acids are produced in and secreted from the porcine adrenal medulla in almost equal amounts.</title>
        <authorList>
            <person name="Bersani M."/>
            <person name="Thim L."/>
            <person name="Rasmussen T.N."/>
            <person name="Holst J.J."/>
        </authorList>
    </citation>
    <scope>NUCLEOTIDE SEQUENCE [MRNA]</scope>
    <scope>PARTIAL PROTEIN SEQUENCE</scope>
    <source>
        <tissue>Adrenal medulla</tissue>
    </source>
</reference>
<reference key="3">
    <citation type="journal article" date="1983" name="FEBS Lett.">
        <title>Galanin - a novel biologically active peptide from porcine intestine.</title>
        <authorList>
            <person name="Tatemoto K."/>
            <person name="Rokaeus A."/>
            <person name="Joernvall H."/>
            <person name="McDonald T.J."/>
            <person name="Mutt V."/>
        </authorList>
    </citation>
    <scope>PROTEIN SEQUENCE OF 33-61</scope>
    <scope>FUNCTION</scope>
    <scope>AMIDATION AT ALA-61</scope>
    <scope>SUBCELLULAR LOCATION</scope>
    <source>
        <tissue>Intestine</tissue>
    </source>
</reference>
<reference key="4">
    <citation type="journal article" date="1992" name="Peptides">
        <title>Characterization of porcine gastric galanin.</title>
        <authorList>
            <person name="McDonald T.J."/>
            <person name="Krantis A."/>
            <person name="Clarke M."/>
            <person name="Mutt V."/>
            <person name="Joernvall H."/>
        </authorList>
    </citation>
    <scope>PROTEIN SEQUENCE OF 33-61</scope>
    <scope>FUNCTION</scope>
    <scope>SUBCELLULAR LOCATION</scope>
    <source>
        <tissue>Gastric corpus</tissue>
    </source>
</reference>
<name>GALA_PIG</name>